<dbReference type="EMBL" id="CP000713">
    <property type="protein sequence ID" value="ABQ93104.1"/>
    <property type="molecule type" value="Genomic_DNA"/>
</dbReference>
<dbReference type="SMR" id="A5WBR3"/>
<dbReference type="STRING" id="349106.PsycPRwf_0144"/>
<dbReference type="KEGG" id="prw:PsycPRwf_0144"/>
<dbReference type="eggNOG" id="COG1678">
    <property type="taxonomic scope" value="Bacteria"/>
</dbReference>
<dbReference type="HOGENOM" id="CLU_057596_1_0_6"/>
<dbReference type="GO" id="GO:0005829">
    <property type="term" value="C:cytosol"/>
    <property type="evidence" value="ECO:0007669"/>
    <property type="project" value="TreeGrafter"/>
</dbReference>
<dbReference type="Gene3D" id="3.40.1740.10">
    <property type="entry name" value="VC0467-like"/>
    <property type="match status" value="1"/>
</dbReference>
<dbReference type="HAMAP" id="MF_00758">
    <property type="entry name" value="UPF0301"/>
    <property type="match status" value="1"/>
</dbReference>
<dbReference type="InterPro" id="IPR003774">
    <property type="entry name" value="AlgH-like"/>
</dbReference>
<dbReference type="PANTHER" id="PTHR30327">
    <property type="entry name" value="UNCHARACTERIZED PROTEIN YQGE"/>
    <property type="match status" value="1"/>
</dbReference>
<dbReference type="PANTHER" id="PTHR30327:SF1">
    <property type="entry name" value="UPF0301 PROTEIN YQGE"/>
    <property type="match status" value="1"/>
</dbReference>
<dbReference type="Pfam" id="PF02622">
    <property type="entry name" value="DUF179"/>
    <property type="match status" value="1"/>
</dbReference>
<dbReference type="SUPFAM" id="SSF143456">
    <property type="entry name" value="VC0467-like"/>
    <property type="match status" value="1"/>
</dbReference>
<reference key="1">
    <citation type="submission" date="2007-05" db="EMBL/GenBank/DDBJ databases">
        <title>Complete sequence of chromosome of Psychrobacter sp. PRwf-1.</title>
        <authorList>
            <consortium name="US DOE Joint Genome Institute"/>
            <person name="Copeland A."/>
            <person name="Lucas S."/>
            <person name="Lapidus A."/>
            <person name="Barry K."/>
            <person name="Detter J.C."/>
            <person name="Glavina del Rio T."/>
            <person name="Hammon N."/>
            <person name="Israni S."/>
            <person name="Dalin E."/>
            <person name="Tice H."/>
            <person name="Pitluck S."/>
            <person name="Chain P."/>
            <person name="Malfatti S."/>
            <person name="Shin M."/>
            <person name="Vergez L."/>
            <person name="Schmutz J."/>
            <person name="Larimer F."/>
            <person name="Land M."/>
            <person name="Hauser L."/>
            <person name="Kyrpides N."/>
            <person name="Kim E."/>
            <person name="Tiedje J."/>
            <person name="Richardson P."/>
        </authorList>
    </citation>
    <scope>NUCLEOTIDE SEQUENCE [LARGE SCALE GENOMIC DNA]</scope>
    <source>
        <strain>PRwf-1</strain>
    </source>
</reference>
<protein>
    <recommendedName>
        <fullName evidence="1">UPF0301 protein PsycPRwf_0144</fullName>
    </recommendedName>
</protein>
<evidence type="ECO:0000255" key="1">
    <source>
        <dbReference type="HAMAP-Rule" id="MF_00758"/>
    </source>
</evidence>
<accession>A5WBR3</accession>
<comment type="similarity">
    <text evidence="1">Belongs to the UPF0301 (AlgH) family.</text>
</comment>
<gene>
    <name type="ordered locus">PsycPRwf_0144</name>
</gene>
<feature type="chain" id="PRO_1000072827" description="UPF0301 protein PsycPRwf_0144">
    <location>
        <begin position="1"/>
        <end position="188"/>
    </location>
</feature>
<name>Y144_PSYWF</name>
<organism>
    <name type="scientific">Psychrobacter sp. (strain PRwf-1)</name>
    <dbReference type="NCBI Taxonomy" id="349106"/>
    <lineage>
        <taxon>Bacteria</taxon>
        <taxon>Pseudomonadati</taxon>
        <taxon>Pseudomonadota</taxon>
        <taxon>Gammaproteobacteria</taxon>
        <taxon>Moraxellales</taxon>
        <taxon>Moraxellaceae</taxon>
        <taxon>Psychrobacter</taxon>
    </lineage>
</organism>
<proteinExistence type="inferred from homology"/>
<sequence length="188" mass="20850">MTLDNLTHHFLIAAPSMPDERFAQSLVYICRHDRHGVLGLVVNRPIFDTQVGHLLDNLDIEVTDTSVMYDTPLDGGPVYPEVGFVLHTGQPTWASSFPISENVCITTSKDILQNIAAGSAGIGHYHLCLGHASWHEGQLEKEISQGDWLVSPGDLSLLFEIPFEERWRHAAEKIGVHLDFLSDEVGRA</sequence>